<organismHost>
    <name type="scientific">Escherichia coli</name>
    <dbReference type="NCBI Taxonomy" id="562"/>
</organismHost>
<evidence type="ECO:0000250" key="1"/>
<evidence type="ECO:0000255" key="2"/>
<sequence length="494" mass="57285">MATEIFSDVVKSVWSHATAKHAHLRMAVQVDNRSRLLSDLVYQLEKRLSEETHLDDETYALYESQTGLLEDHMALVRKCAAQLDNSNTIDHRTPLDPECVFLFEMICPGVRYGKTLNSLWSKYAAQWPEKLIRQELDMVKPLSFKDEVAKYMEKMQEKTRKNRMTQKVINEMRIAHQKGWFFVFDTLTLADDRLQAFNENPNALRDYFRTVGRAVLRAEGRSVKDSYNDCYRYLCVPEFGGQHGRLHWHVVHMVRTLPLGSHDPNFGRPVRNYRQINSFRGMWPYGFTQPIAVRYQHDAYSRKGWLWPVDKSGKAMQSKPYQAVAWYVTKYVAKQSDQRQKAITERQKKCKNPLMAICLKKEFRVRSSRKLGMELPSMAHLSNKVLLELSRISFDSSPLYQIVKENAKKQLTLNIGALPLHVILDVRPEVRSMLKAIRRLMKKTPEFNWQSSIASMTVTLKNGDISDEARQYIIDAGITPTDLRAKATQTFGGK</sequence>
<protein>
    <recommendedName>
        <fullName>A protein</fullName>
    </recommendedName>
    <alternativeName>
        <fullName>GPA</fullName>
    </alternativeName>
</protein>
<reference key="1">
    <citation type="journal article" date="1996" name="J. Biochem.">
        <title>The virion proteins encoded by bacteriophage phi K and its host-range mutant phi KhT: host-range determination and DNA binding properties.</title>
        <authorList>
            <person name="Kodaira K."/>
            <person name="Oki M."/>
            <person name="Kakikawa M."/>
            <person name="Kimoto H."/>
            <person name="Taketo A."/>
        </authorList>
    </citation>
    <scope>NUCLEOTIDE SEQUENCE [GENOMIC DNA] (PHI-K AND MUTANT PHI KHT)</scope>
</reference>
<reference key="2">
    <citation type="journal article" date="1989" name="Biochim. Biophys. Acta">
        <title>Possible finger structure in gene A protein of Microviridae.</title>
        <authorList>
            <person name="Kodaira K."/>
            <person name="Miyata T."/>
            <person name="Suzuki K."/>
            <person name="Nakano K."/>
            <person name="Taketo A."/>
        </authorList>
    </citation>
    <scope>NUCLEOTIDE SEQUENCE [GENOMIC DNA] OF 228-257</scope>
</reference>
<comment type="function">
    <text>The A protein is a specific endonuclease that cleaves the viral strand of supertwisted, closed circular DNA at a unique site in the A gene. The A protein also causes relaxation of supertwisted DNA and forms a complex with viral DNA that has a discontinuity in gene A of the viral strand.</text>
</comment>
<comment type="miscellaneous">
    <text>Phi KhT, a host-range mutant of phi K, can grow on E.coli C and B, besides K12, and is more thermosensitive than the parental phage phi K.</text>
</comment>
<accession>P25244</accession>
<name>VGA_BPPHK</name>
<keyword id="KW-0235">DNA replication</keyword>
<keyword id="KW-0238">DNA-binding</keyword>
<keyword id="KW-0255">Endonuclease</keyword>
<keyword id="KW-0378">Hydrolase</keyword>
<keyword id="KW-0479">Metal-binding</keyword>
<keyword id="KW-0540">Nuclease</keyword>
<keyword id="KW-1194">Viral DNA replication</keyword>
<keyword id="KW-0862">Zinc</keyword>
<keyword id="KW-0863">Zinc-finger</keyword>
<gene>
    <name type="primary">A</name>
</gene>
<proteinExistence type="predicted"/>
<feature type="chain" id="PRO_0000164866" description="A protein">
    <location>
        <begin position="1"/>
        <end position="494"/>
    </location>
</feature>
<feature type="zinc finger region" evidence="2">
    <location>
        <begin position="230"/>
        <end position="252"/>
    </location>
</feature>
<feature type="active site" description="O-(5'-phospho-DNA)-tyrosine intermediate" evidence="1">
    <location>
        <position position="327"/>
    </location>
</feature>
<feature type="active site" description="O-(5'-phospho-DNA)-tyrosine intermediate" evidence="1">
    <location>
        <position position="331"/>
    </location>
</feature>
<dbReference type="EMBL" id="X60323">
    <property type="protein sequence ID" value="CAA42884.1"/>
    <property type="molecule type" value="Genomic_DNA"/>
</dbReference>
<dbReference type="EMBL" id="X12610">
    <property type="protein sequence ID" value="CAA31129.1"/>
    <property type="molecule type" value="Genomic_DNA"/>
</dbReference>
<dbReference type="PIR" id="S13753">
    <property type="entry name" value="S13753"/>
</dbReference>
<dbReference type="RefSeq" id="NP_043942.1">
    <property type="nucleotide sequence ID" value="NC_001730.1"/>
</dbReference>
<dbReference type="SMR" id="P25244"/>
<dbReference type="GeneID" id="1261192"/>
<dbReference type="KEGG" id="vg:1261192"/>
<dbReference type="Proteomes" id="UP000002122">
    <property type="component" value="Segment"/>
</dbReference>
<dbReference type="GO" id="GO:0003677">
    <property type="term" value="F:DNA binding"/>
    <property type="evidence" value="ECO:0007669"/>
    <property type="project" value="UniProtKB-KW"/>
</dbReference>
<dbReference type="GO" id="GO:0004519">
    <property type="term" value="F:endonuclease activity"/>
    <property type="evidence" value="ECO:0007669"/>
    <property type="project" value="UniProtKB-KW"/>
</dbReference>
<dbReference type="GO" id="GO:0008270">
    <property type="term" value="F:zinc ion binding"/>
    <property type="evidence" value="ECO:0007669"/>
    <property type="project" value="UniProtKB-KW"/>
</dbReference>
<dbReference type="GO" id="GO:0006260">
    <property type="term" value="P:DNA replication"/>
    <property type="evidence" value="ECO:0007669"/>
    <property type="project" value="UniProtKB-KW"/>
</dbReference>
<dbReference type="GO" id="GO:0039693">
    <property type="term" value="P:viral DNA genome replication"/>
    <property type="evidence" value="ECO:0007669"/>
    <property type="project" value="UniProtKB-KW"/>
</dbReference>
<dbReference type="InterPro" id="IPR008766">
    <property type="entry name" value="Replication_gene_A-like"/>
</dbReference>
<dbReference type="Pfam" id="PF05840">
    <property type="entry name" value="Phage_GPA"/>
    <property type="match status" value="1"/>
</dbReference>
<organism>
    <name type="scientific">Enterobacteria phage phiK</name>
    <name type="common">Bacteriophage phi-K</name>
    <dbReference type="NCBI Taxonomy" id="10848"/>
    <lineage>
        <taxon>Viruses</taxon>
        <taxon>Monodnaviria</taxon>
        <taxon>Sangervirae</taxon>
        <taxon>Phixviricota</taxon>
        <taxon>Malgrandaviricetes</taxon>
        <taxon>Petitvirales</taxon>
        <taxon>Microviridae</taxon>
        <taxon>Bullavirinae</taxon>
        <taxon>Alphatrevirus</taxon>
    </lineage>
</organism>